<feature type="initiator methionine" description="Removed" evidence="10 11">
    <location>
        <position position="1"/>
    </location>
</feature>
<feature type="chain" id="PRO_0000168189" description="Blood group Rh(CE) polypeptide">
    <location>
        <begin position="2"/>
        <end position="417"/>
    </location>
</feature>
<feature type="transmembrane region" description="Helical" evidence="1">
    <location>
        <begin position="12"/>
        <end position="32"/>
    </location>
</feature>
<feature type="transmembrane region" description="Helical" evidence="1">
    <location>
        <begin position="44"/>
        <end position="64"/>
    </location>
</feature>
<feature type="transmembrane region" description="Helical" evidence="1">
    <location>
        <begin position="77"/>
        <end position="97"/>
    </location>
</feature>
<feature type="transmembrane region" description="Helical" evidence="1">
    <location>
        <begin position="125"/>
        <end position="145"/>
    </location>
</feature>
<feature type="transmembrane region" description="Helical" evidence="1">
    <location>
        <begin position="172"/>
        <end position="192"/>
    </location>
</feature>
<feature type="transmembrane region" description="Helical" evidence="1">
    <location>
        <begin position="203"/>
        <end position="223"/>
    </location>
</feature>
<feature type="transmembrane region" description="Helical" evidence="1">
    <location>
        <begin position="238"/>
        <end position="258"/>
    </location>
</feature>
<feature type="transmembrane region" description="Helical" evidence="1">
    <location>
        <begin position="265"/>
        <end position="285"/>
    </location>
</feature>
<feature type="transmembrane region" description="Helical" evidence="1">
    <location>
        <begin position="287"/>
        <end position="307"/>
    </location>
</feature>
<feature type="transmembrane region" description="Helical" evidence="1">
    <location>
        <begin position="331"/>
        <end position="351"/>
    </location>
</feature>
<feature type="transmembrane region" description="Helical" evidence="1">
    <location>
        <begin position="358"/>
        <end position="378"/>
    </location>
</feature>
<feature type="splice variant" id="VSP_037505" description="In isoform 8h." evidence="23">
    <location>
        <begin position="163"/>
        <end position="409"/>
    </location>
</feature>
<feature type="splice variant" id="VSP_005701" description="In isoform RHVIII." evidence="22">
    <location>
        <begin position="163"/>
        <end position="313"/>
    </location>
</feature>
<feature type="splice variant" id="VSP_037506" description="In isoform 8a." evidence="23">
    <location>
        <begin position="163"/>
        <end position="220"/>
    </location>
</feature>
<feature type="splice variant" id="VSP_037507" description="In isoform 8e." evidence="23">
    <original>TDYHMNLRHFYVFAAYFGLTVAWCLPKPLPKGTEDNDQRAT</original>
    <variation>DWLPGPPQHWGTQLGHRDSSHVWSPDRFAPKSQNMESTSCG</variation>
    <location>
        <begin position="163"/>
        <end position="203"/>
    </location>
</feature>
<feature type="splice variant" id="VSP_005702" description="In isoform RHVI and isoform 7a." evidence="22 23">
    <location>
        <begin position="164"/>
        <end position="268"/>
    </location>
</feature>
<feature type="splice variant" id="VSP_037508" description="In isoform 8e." evidence="23">
    <location>
        <begin position="204"/>
        <end position="417"/>
    </location>
</feature>
<feature type="splice variant" id="VSP_037509" description="In isoform 4g." evidence="23 24">
    <location>
        <begin position="212"/>
        <end position="384"/>
    </location>
</feature>
<feature type="splice variant" id="VSP_038405" description="In isoform RhPI-Alpha." evidence="24">
    <original>LLRSPIQRKNAMFNTY</original>
    <variation>DRFAPKSQNMESTSCG</variation>
    <location>
        <begin position="227"/>
        <end position="242"/>
    </location>
</feature>
<feature type="splice variant" id="VSP_038406" description="In isoform RhPI-Alpha." evidence="24">
    <location>
        <begin position="243"/>
        <end position="417"/>
    </location>
</feature>
<feature type="splice variant" id="VSP_037510" description="In isoform 2e." evidence="23">
    <original>TYVHSAVLAGGVAVGTSCHLIPSPWLAMVLGLVAGLISIGG</original>
    <variation>DWLPGPPQHWGTQLGHRDSSHVWSPDRFAPKSQNMESTSCG</variation>
    <location>
        <begin position="268"/>
        <end position="308"/>
    </location>
</feature>
<feature type="splice variant" id="VSP_037511" description="In isoform 8a." evidence="23">
    <location>
        <begin position="301"/>
        <end position="313"/>
    </location>
</feature>
<feature type="splice variant" id="VSP_037512" description="In isoform 2e." evidence="23">
    <location>
        <begin position="309"/>
        <end position="417"/>
    </location>
</feature>
<feature type="splice variant" id="VSP_037513" description="In isoform 1h." evidence="23">
    <location>
        <begin position="314"/>
        <end position="409"/>
    </location>
</feature>
<feature type="splice variant" id="VSP_005703" description="In isoform RHIV." evidence="22 23">
    <original>VCCNRVLGIHHISVMHSIFSLLGLLGEITYIVLLVLHTVWN</original>
    <variation>DWLPGPPQHWGTQLGHRDSSHVWSPDRFAPKSQNMESTSCG</variation>
    <location>
        <begin position="314"/>
        <end position="354"/>
    </location>
</feature>
<feature type="splice variant" id="VSP_005704" description="In isoform RHIV." evidence="22 23">
    <location>
        <begin position="355"/>
        <end position="417"/>
    </location>
</feature>
<feature type="splice variant" id="VSP_037514" description="In isoform 1d." evidence="23">
    <original>MIGFQVLLSIGELSLAIVIALTSGLLTGLLLNLKIWKAPHVAKYFDDQVFWKFPHLAVGF</original>
    <variation>IFLIWLLDFKQKHPRKTRPVQKQDNFLSLLPAVREKRS</variation>
    <location>
        <begin position="358"/>
        <end position="417"/>
    </location>
</feature>
<feature type="splice variant" id="VSP_005705" description="In isoform RHVI and isoform 1c." evidence="22 23">
    <original>IGFQVLLSIGELSLAIVIALTSGLLTGLLLNLKIWKAPHVAKYFDDQVFWKFPHLAVGF</original>
    <variation>FAPKSQNMESTSCG</variation>
    <location>
        <begin position="359"/>
        <end position="417"/>
    </location>
</feature>
<feature type="sequence variant" id="VAR_006911" description="Found in antigen c/Rh4; dbSNP:rs586178." evidence="2 3 4 5 7 8 13 15 17 18 19 21">
    <original>C</original>
    <variation>W</variation>
    <location>
        <position position="16"/>
    </location>
</feature>
<feature type="sequence variant" id="VAR_006912" description="In C(X)/Rh9 antigen; dbSNP:rs145034271.">
    <original>A</original>
    <variation>T</variation>
    <location>
        <position position="36"/>
    </location>
</feature>
<feature type="sequence variant" id="VAR_006913" description="Found in antigen C(W)/Rh8; dbSNP:rs138268848.">
    <original>Q</original>
    <variation>R</variation>
    <location>
        <position position="41"/>
    </location>
</feature>
<feature type="sequence variant" id="VAR_006914" description="Found in antigen C/Rh2; dbSNP:rs181860403." evidence="3 6 15 17 18 19 20">
    <original>L</original>
    <variation>I</variation>
    <location>
        <position position="60"/>
    </location>
</feature>
<feature type="sequence variant" id="VAR_006915" description="Found in antigen C/Rh2; dbSNP:rs1053344." evidence="3 6 15 17 18 19 20">
    <original>N</original>
    <variation>S</variation>
    <location>
        <position position="68"/>
    </location>
</feature>
<feature type="sequence variant" id="VAR_006916" description="Found in antigen C/Rh2; dbSNP:rs676785." evidence="3 6 15 17 18 19 20">
    <original>P</original>
    <variation>S</variation>
    <location>
        <position position="103"/>
    </location>
</feature>
<feature type="sequence variant" id="VAR_055260" description="In dbSNP:rs1053346." evidence="3">
    <original>A</original>
    <variation>V</variation>
    <location>
        <position position="127"/>
    </location>
</feature>
<feature type="sequence variant" id="VAR_055261" description="In dbSNP:rs1053347." evidence="3">
    <original>G</original>
    <variation>D</variation>
    <location>
        <position position="128"/>
    </location>
</feature>
<feature type="sequence variant" id="VAR_013301" description="Found in antigen RhEKH." evidence="3">
    <original>R</original>
    <variation>T</variation>
    <location>
        <position position="154"/>
    </location>
</feature>
<feature type="sequence variant" id="VAR_055262" description="In dbSNP:rs1053350.">
    <original>T</original>
    <variation>S</variation>
    <location>
        <position position="182"/>
    </location>
</feature>
<feature type="sequence variant" id="VAR_055263" description="In dbSNP:rs1053354.">
    <original>N</original>
    <variation>K</variation>
    <location>
        <position position="198"/>
    </location>
</feature>
<feature type="sequence variant" id="VAR_006917" description="Found in antigen E/Rh3; dbSNP:rs609320." evidence="2 3 4 5 7 8 13 15 17 18 19 21">
    <original>A</original>
    <variation>P</variation>
    <location>
        <position position="226"/>
    </location>
</feature>
<feature type="sequence variant" id="VAR_013302" description="Found in antigen RhEFM; dbSNP:rs142246017." evidence="3 21">
    <original>Q</original>
    <variation>E</variation>
    <location>
        <position position="233"/>
    </location>
</feature>
<feature type="sequence variant" id="VAR_013303" description="Found in antigen RhEFM; dbSNP:rs144163296." evidence="3 4">
    <original>M</original>
    <variation>V</variation>
    <location>
        <position position="238"/>
    </location>
</feature>
<feature type="sequence variant" id="VAR_006918" description="In VS antigen; dbSNP:rs1053361." evidence="4 21">
    <original>L</original>
    <variation>V</variation>
    <location>
        <position position="245"/>
    </location>
</feature>
<feature type="sequence variant" id="VAR_057987" description="In dbSNP:rs1132763." evidence="4">
    <original>R</original>
    <variation>G</variation>
    <location>
        <position position="263"/>
    </location>
</feature>
<feature type="sequence variant" id="VAR_057988" description="In dbSNP:rs1132764." evidence="4 19">
    <original>M</original>
    <variation>K</variation>
    <location>
        <position position="267"/>
    </location>
</feature>
<feature type="sequence variant" id="VAR_055264" description="In dbSNP:rs1053366.">
    <original>H</original>
    <variation>P</variation>
    <location>
        <position position="323"/>
    </location>
</feature>
<feature type="sequence variant" id="VAR_055265" description="In dbSNP:rs1053367.">
    <original>I</original>
    <variation>S</variation>
    <location>
        <position position="325"/>
    </location>
</feature>
<feature type="sequence variant" id="VAR_055266" description="In dbSNP:rs1053370.">
    <original>H</original>
    <variation>D</variation>
    <location>
        <position position="329"/>
    </location>
</feature>
<feature type="sequence variant" id="VAR_055267" description="In dbSNP:rs1053371.">
    <original>H</original>
    <variation>R</variation>
    <location>
        <position position="329"/>
    </location>
</feature>
<feature type="sequence variant" id="VAR_055268" description="In dbSNP:rs1053372.">
    <original>S</original>
    <variation>Y</variation>
    <location>
        <position position="330"/>
    </location>
</feature>
<feature type="sequence variant" id="VAR_055269" description="In dbSNP:rs1053373.">
    <original>I</original>
    <variation>N</variation>
    <location>
        <position position="331"/>
    </location>
</feature>
<feature type="sequence variant" id="VAR_057989" description="In dbSNP:rs630612." evidence="18">
    <original>V</original>
    <variation>E</variation>
    <location>
        <position position="398"/>
    </location>
</feature>
<feature type="sequence conflict" description="In Ref. 13; ACK75562." evidence="25" ref="13">
    <original>R</original>
    <variation>W</variation>
    <location>
        <position position="10"/>
    </location>
</feature>
<feature type="sequence conflict" description="In Ref. 19; AA sequence." evidence="25" ref="19">
    <original>C</original>
    <variation>L</variation>
    <location>
        <position position="12"/>
    </location>
</feature>
<feature type="sequence conflict" description="In Ref. 3; CAA44812." evidence="25" ref="3">
    <original>D</original>
    <variation>G</variation>
    <location>
        <position position="53"/>
    </location>
</feature>
<feature type="sequence conflict" description="In Ref. 3; CAA44812." evidence="25" ref="3">
    <original>G</original>
    <variation>C</variation>
    <location>
        <position position="61"/>
    </location>
</feature>
<feature type="sequence conflict" description="In Ref. 7; AAN75123." evidence="25" ref="7">
    <original>R</original>
    <variation>W</variation>
    <location>
        <position position="114"/>
    </location>
</feature>
<feature type="sequence conflict" description="In Ref. 13; ACK75563/ACK75565." evidence="25" ref="13">
    <original>L</original>
    <variation>P</variation>
    <location>
        <position position="115"/>
    </location>
</feature>
<feature type="sequence conflict" description="In Ref. 6; BAB16597/BAA82627." evidence="25" ref="6">
    <original>M</original>
    <variation>L</variation>
    <location>
        <position position="121"/>
    </location>
</feature>
<feature type="sequence conflict" description="In Ref. 13; ACK75564." evidence="25" ref="13">
    <original>S</original>
    <variation>P</variation>
    <location>
        <position position="122"/>
    </location>
</feature>
<feature type="sequence conflict" description="In Ref. 13; ACK75565." evidence="25" ref="13">
    <original>I</original>
    <variation>N</variation>
    <location>
        <position position="125"/>
    </location>
</feature>
<feature type="sequence conflict" description="In Ref. 6; BAB16597/BAA82627." evidence="25" ref="6">
    <original>T</original>
    <variation>N</variation>
    <location>
        <position position="152"/>
    </location>
</feature>
<feature type="sequence conflict" description="In Ref. 8; AAT35811." evidence="25" ref="8">
    <original>M</original>
    <variation>V</variation>
    <location>
        <position position="155"/>
    </location>
</feature>
<feature type="sequence conflict" description="In Ref. 13; ACK75566." evidence="25" ref="13">
    <original>H</original>
    <variation>L</variation>
    <location>
        <position position="166"/>
    </location>
</feature>
<feature type="sequence conflict" description="In Ref. 13; ACK75567." evidence="25" ref="13">
    <original>L</original>
    <variation>Q</variation>
    <location>
        <position position="169"/>
    </location>
</feature>
<feature type="sequence conflict" description="In Ref. 13; ACK75568." evidence="25" ref="13">
    <original>R</original>
    <variation>T</variation>
    <location>
        <position position="201"/>
    </location>
</feature>
<feature type="sequence conflict" description="In Ref. 13; ACK75569." evidence="25" ref="13">
    <original>W</original>
    <variation>R</variation>
    <location>
        <position position="217"/>
    </location>
</feature>
<feature type="sequence conflict" description="In Ref. 13; ACK75570." evidence="25" ref="13">
    <original>T</original>
    <variation>I</variation>
    <location>
        <position position="241"/>
    </location>
</feature>
<feature type="sequence conflict" description="In Ref. 7; AAN75124." evidence="25" ref="7">
    <original>V</original>
    <variation>M</variation>
    <location>
        <position position="250"/>
    </location>
</feature>
<feature type="sequence conflict" description="In Ref. 7; AAN75122." evidence="25" ref="7">
    <original>A</original>
    <variation>V</variation>
    <location>
        <position position="273"/>
    </location>
</feature>
<feature type="sequence conflict" description="In Ref. 13; ACK75572." evidence="25" ref="13">
    <original>L</original>
    <variation>Q</variation>
    <location>
        <position position="303"/>
    </location>
</feature>
<feature type="sequence conflict" description="In Ref. 7; AAN75122." evidence="25" ref="7">
    <original>L</original>
    <variation>V</variation>
    <location>
        <position position="378"/>
    </location>
</feature>
<feature type="sequence conflict" description="In Ref. 22; AA sequence." evidence="25" ref="22">
    <original>WK</original>
    <variation>DI</variation>
    <location>
        <begin position="408"/>
        <end position="409"/>
    </location>
</feature>
<feature type="helix" evidence="35">
    <location>
        <begin position="12"/>
        <end position="31"/>
    </location>
</feature>
<feature type="strand" evidence="36">
    <location>
        <begin position="32"/>
        <end position="34"/>
    </location>
</feature>
<feature type="helix" evidence="35">
    <location>
        <begin position="44"/>
        <end position="59"/>
    </location>
</feature>
<feature type="helix" evidence="35">
    <location>
        <begin position="61"/>
        <end position="65"/>
    </location>
</feature>
<feature type="turn" evidence="35">
    <location>
        <begin position="66"/>
        <end position="68"/>
    </location>
</feature>
<feature type="strand" evidence="35">
    <location>
        <begin position="69"/>
        <end position="71"/>
    </location>
</feature>
<feature type="helix" evidence="35">
    <location>
        <begin position="73"/>
        <end position="98"/>
    </location>
</feature>
<feature type="strand" evidence="36">
    <location>
        <begin position="106"/>
        <end position="108"/>
    </location>
</feature>
<feature type="helix" evidence="35">
    <location>
        <begin position="110"/>
        <end position="127"/>
    </location>
</feature>
<feature type="turn" evidence="35">
    <location>
        <begin position="128"/>
        <end position="132"/>
    </location>
</feature>
<feature type="helix" evidence="35">
    <location>
        <begin position="136"/>
        <end position="161"/>
    </location>
</feature>
<feature type="helix" evidence="35">
    <location>
        <begin position="167"/>
        <end position="171"/>
    </location>
</feature>
<feature type="helix" evidence="35">
    <location>
        <begin position="172"/>
        <end position="186"/>
    </location>
</feature>
<feature type="helix" evidence="35">
    <location>
        <begin position="203"/>
        <end position="219"/>
    </location>
</feature>
<feature type="helix" evidence="35">
    <location>
        <begin position="220"/>
        <end position="222"/>
    </location>
</feature>
<feature type="strand" evidence="35">
    <location>
        <begin position="224"/>
        <end position="227"/>
    </location>
</feature>
<feature type="helix" evidence="35">
    <location>
        <begin position="231"/>
        <end position="256"/>
    </location>
</feature>
<feature type="turn" evidence="35">
    <location>
        <begin position="257"/>
        <end position="259"/>
    </location>
</feature>
<feature type="strand" evidence="35">
    <location>
        <begin position="263"/>
        <end position="265"/>
    </location>
</feature>
<feature type="helix" evidence="35">
    <location>
        <begin position="267"/>
        <end position="273"/>
    </location>
</feature>
<feature type="helix" evidence="35">
    <location>
        <begin position="276"/>
        <end position="280"/>
    </location>
</feature>
<feature type="turn" evidence="35">
    <location>
        <begin position="281"/>
        <end position="287"/>
    </location>
</feature>
<feature type="helix" evidence="35">
    <location>
        <begin position="291"/>
        <end position="311"/>
    </location>
</feature>
<feature type="turn" evidence="35">
    <location>
        <begin position="312"/>
        <end position="314"/>
    </location>
</feature>
<feature type="helix" evidence="35">
    <location>
        <begin position="327"/>
        <end position="347"/>
    </location>
</feature>
<feature type="helix" evidence="35">
    <location>
        <begin position="361"/>
        <end position="388"/>
    </location>
</feature>
<feature type="helix" evidence="35">
    <location>
        <begin position="391"/>
        <end position="393"/>
    </location>
</feature>
<feature type="helix" evidence="35">
    <location>
        <begin position="398"/>
        <end position="400"/>
    </location>
</feature>
<feature type="helix" evidence="35">
    <location>
        <begin position="404"/>
        <end position="406"/>
    </location>
</feature>
<name>RHCE_HUMAN</name>
<accession>P18577</accession>
<accession>A0A1L3H056</accession>
<accession>A7DW68</accession>
<accession>B7UDF3</accession>
<accession>B7UDF4</accession>
<accession>B7UDF5</accession>
<accession>B7UDF6</accession>
<accession>B7UDF7</accession>
<accession>B7UDF8</accession>
<accession>B7UDF9</accession>
<accession>B7UDG0</accession>
<accession>B7UDG1</accession>
<accession>B7UDG2</accession>
<accession>B7UDG3</accession>
<accession>Q02163</accession>
<accession>Q02164</accession>
<accession>Q02165</accession>
<accession>Q16160</accession>
<accession>Q2MJW0</accession>
<accession>Q2VC86</accession>
<accession>Q3LTM6</accession>
<accession>Q6AZX5</accession>
<accession>Q6J2U3</accession>
<accession>Q7RU06</accession>
<accession>Q8IZT2</accession>
<accession>Q8IZT3</accession>
<accession>Q8IZT4</accession>
<accession>Q8IZT5</accession>
<accession>Q9UD13</accession>
<accession>Q9UD14</accession>
<accession>Q9UD15</accession>
<accession>Q9UD16</accession>
<accession>Q9UD73</accession>
<accession>Q9UD74</accession>
<accession>Q9UEC2</accession>
<accession>Q9UEC3</accession>
<accession>Q9UPN0</accession>
<protein>
    <recommendedName>
        <fullName evidence="25">Blood group Rh(CE) polypeptide</fullName>
    </recommendedName>
    <alternativeName>
        <fullName>Rh polypeptide 1</fullName>
        <shortName>RhPI</shortName>
    </alternativeName>
    <alternativeName>
        <fullName>Rh30A</fullName>
    </alternativeName>
    <alternativeName>
        <fullName>RhIXB</fullName>
    </alternativeName>
    <alternativeName>
        <fullName>Rhesus C/E antigens</fullName>
    </alternativeName>
    <cdAntigenName>CD240CE</cdAntigenName>
</protein>
<sequence length="417" mass="45451">MSSKYPRSVRRCLPLCALTLEAALILLFYFFTHYDASLEDQKGLVASYQVGQDLTVMAALGLGFLTSNFRRHSWSSVAFNLFMLALGVQWAILLDGFLSQFPPGKVVITLFSIRLATMSAMSVLISAGAVLGKVNLAQLVVMVLVEVTALGTLRMVISNIFNTDYHMNLRHFYVFAAYFGLTVAWCLPKPLPKGTEDNDQRATIPSLSAMLGALFLWMFWPSVNSALLRSPIQRKNAMFNTYYALAVSVVTAISGSSLAHPQRKISMTYVHSAVLAGGVAVGTSCHLIPSPWLAMVLGLVAGLISIGGAKCLPVCCNRVLGIHHISVMHSIFSLLGLLGEITYIVLLVLHTVWNGNGMIGFQVLLSIGELSLAIVIALTSGLLTGLLLNLKIWKAPHVAKYFDDQVFWKFPHLAVGF</sequence>
<organism>
    <name type="scientific">Homo sapiens</name>
    <name type="common">Human</name>
    <dbReference type="NCBI Taxonomy" id="9606"/>
    <lineage>
        <taxon>Eukaryota</taxon>
        <taxon>Metazoa</taxon>
        <taxon>Chordata</taxon>
        <taxon>Craniata</taxon>
        <taxon>Vertebrata</taxon>
        <taxon>Euteleostomi</taxon>
        <taxon>Mammalia</taxon>
        <taxon>Eutheria</taxon>
        <taxon>Euarchontoglires</taxon>
        <taxon>Primates</taxon>
        <taxon>Haplorrhini</taxon>
        <taxon>Catarrhini</taxon>
        <taxon>Hominidae</taxon>
        <taxon>Homo</taxon>
    </lineage>
</organism>
<gene>
    <name evidence="26" type="primary">RHCE</name>
    <name type="synonym">RHC</name>
    <name type="synonym">RHE</name>
</gene>
<keyword id="KW-0002">3D-structure</keyword>
<keyword id="KW-0025">Alternative splicing</keyword>
<keyword id="KW-0095">Blood group antigen</keyword>
<keyword id="KW-0903">Direct protein sequencing</keyword>
<keyword id="KW-0472">Membrane</keyword>
<keyword id="KW-1267">Proteomics identification</keyword>
<keyword id="KW-1185">Reference proteome</keyword>
<keyword id="KW-0812">Transmembrane</keyword>
<keyword id="KW-1133">Transmembrane helix</keyword>
<proteinExistence type="evidence at protein level"/>
<evidence type="ECO:0000255" key="1"/>
<evidence type="ECO:0000269" key="2">
    <source>
    </source>
</evidence>
<evidence type="ECO:0000269" key="3">
    <source>
    </source>
</evidence>
<evidence type="ECO:0000269" key="4">
    <source>
    </source>
</evidence>
<evidence type="ECO:0000269" key="5">
    <source>
    </source>
</evidence>
<evidence type="ECO:0000269" key="6">
    <source>
    </source>
</evidence>
<evidence type="ECO:0000269" key="7">
    <source>
    </source>
</evidence>
<evidence type="ECO:0000269" key="8">
    <source>
    </source>
</evidence>
<evidence type="ECO:0000269" key="9">
    <source>
    </source>
</evidence>
<evidence type="ECO:0000269" key="10">
    <source>
    </source>
</evidence>
<evidence type="ECO:0000269" key="11">
    <source>
    </source>
</evidence>
<evidence type="ECO:0000269" key="12">
    <source>
    </source>
</evidence>
<evidence type="ECO:0000269" key="13">
    <source>
    </source>
</evidence>
<evidence type="ECO:0000269" key="14">
    <source>
    </source>
</evidence>
<evidence type="ECO:0000269" key="15">
    <source>
    </source>
</evidence>
<evidence type="ECO:0000269" key="16">
    <source>
    </source>
</evidence>
<evidence type="ECO:0000269" key="17">
    <source ref="10"/>
</evidence>
<evidence type="ECO:0000269" key="18">
    <source ref="12"/>
</evidence>
<evidence type="ECO:0000269" key="19">
    <source ref="13"/>
</evidence>
<evidence type="ECO:0000269" key="20">
    <source ref="8"/>
</evidence>
<evidence type="ECO:0000269" key="21">
    <source ref="9"/>
</evidence>
<evidence type="ECO:0000303" key="22">
    <source>
    </source>
</evidence>
<evidence type="ECO:0000303" key="23">
    <source>
    </source>
</evidence>
<evidence type="ECO:0000303" key="24">
    <source>
    </source>
</evidence>
<evidence type="ECO:0000305" key="25"/>
<evidence type="ECO:0000312" key="26">
    <source>
        <dbReference type="HGNC" id="HGNC:10008"/>
    </source>
</evidence>
<evidence type="ECO:0007744" key="27">
    <source>
        <dbReference type="PDB" id="7UZQ"/>
    </source>
</evidence>
<evidence type="ECO:0007744" key="28">
    <source>
        <dbReference type="PDB" id="7V0K"/>
    </source>
</evidence>
<evidence type="ECO:0007744" key="29">
    <source>
        <dbReference type="PDB" id="7V0S"/>
    </source>
</evidence>
<evidence type="ECO:0007744" key="30">
    <source>
        <dbReference type="PDB" id="8CRT"/>
    </source>
</evidence>
<evidence type="ECO:0007744" key="31">
    <source>
        <dbReference type="PDB" id="8CS9"/>
    </source>
</evidence>
<evidence type="ECO:0007744" key="32">
    <source>
        <dbReference type="PDB" id="8CSL"/>
    </source>
</evidence>
<evidence type="ECO:0007744" key="33">
    <source>
        <dbReference type="PDB" id="8CSX"/>
    </source>
</evidence>
<evidence type="ECO:0007744" key="34">
    <source>
        <dbReference type="PDB" id="8CTE"/>
    </source>
</evidence>
<evidence type="ECO:0007829" key="35">
    <source>
        <dbReference type="PDB" id="7UZQ"/>
    </source>
</evidence>
<evidence type="ECO:0007829" key="36">
    <source>
        <dbReference type="PDB" id="8CSX"/>
    </source>
</evidence>
<dbReference type="EMBL" id="X54534">
    <property type="protein sequence ID" value="CAA38401.1"/>
    <property type="molecule type" value="mRNA"/>
</dbReference>
<dbReference type="EMBL" id="M34015">
    <property type="protein sequence ID" value="AAA36567.1"/>
    <property type="molecule type" value="mRNA"/>
</dbReference>
<dbReference type="EMBL" id="X63095">
    <property type="protein sequence ID" value="CAA44809.1"/>
    <property type="molecule type" value="mRNA"/>
</dbReference>
<dbReference type="EMBL" id="X63096">
    <property type="protein sequence ID" value="CAA44810.1"/>
    <property type="molecule type" value="mRNA"/>
</dbReference>
<dbReference type="EMBL" id="X63098">
    <property type="protein sequence ID" value="CAA44812.1"/>
    <property type="molecule type" value="mRNA"/>
</dbReference>
<dbReference type="EMBL" id="S57967">
    <property type="protein sequence ID" value="AAB26080.1"/>
    <property type="molecule type" value="mRNA"/>
</dbReference>
<dbReference type="EMBL" id="DQ266400">
    <property type="protein sequence ID" value="ABB69097.1"/>
    <property type="molecule type" value="mRNA"/>
</dbReference>
<dbReference type="EMBL" id="AB018644">
    <property type="protein sequence ID" value="BAA33927.1"/>
    <property type="molecule type" value="mRNA"/>
</dbReference>
<dbReference type="EMBL" id="AB018645">
    <property type="protein sequence ID" value="BAA33928.1"/>
    <property type="molecule type" value="mRNA"/>
</dbReference>
<dbReference type="EMBL" id="AB030388">
    <property type="protein sequence ID" value="BAA82627.1"/>
    <property type="molecule type" value="mRNA"/>
</dbReference>
<dbReference type="EMBL" id="AB049753">
    <property type="protein sequence ID" value="BAB16597.1"/>
    <property type="molecule type" value="mRNA"/>
</dbReference>
<dbReference type="EMBL" id="AF510065">
    <property type="protein sequence ID" value="AAN75121.1"/>
    <property type="molecule type" value="mRNA"/>
</dbReference>
<dbReference type="EMBL" id="AF510066">
    <property type="protein sequence ID" value="AAN75122.1"/>
    <property type="molecule type" value="mRNA"/>
</dbReference>
<dbReference type="EMBL" id="AF510067">
    <property type="protein sequence ID" value="AAN75123.1"/>
    <property type="molecule type" value="mRNA"/>
</dbReference>
<dbReference type="EMBL" id="AF510068">
    <property type="protein sequence ID" value="AAN75124.1"/>
    <property type="molecule type" value="mRNA"/>
</dbReference>
<dbReference type="EMBL" id="AY603478">
    <property type="protein sequence ID" value="AAT35811.1"/>
    <property type="molecule type" value="mRNA"/>
</dbReference>
<dbReference type="EMBL" id="DQ178642">
    <property type="protein sequence ID" value="ABA25912.1"/>
    <property type="molecule type" value="mRNA"/>
</dbReference>
<dbReference type="EMBL" id="DQ266353">
    <property type="protein sequence ID" value="ABB97471.1"/>
    <property type="molecule type" value="mRNA"/>
</dbReference>
<dbReference type="EMBL" id="DQ322275">
    <property type="protein sequence ID" value="ABC55358.1"/>
    <property type="molecule type" value="mRNA"/>
</dbReference>
<dbReference type="EMBL" id="AM398146">
    <property type="protein sequence ID" value="CAL44958.1"/>
    <property type="molecule type" value="Genomic_DNA"/>
</dbReference>
<dbReference type="EMBL" id="FJ486155">
    <property type="protein sequence ID" value="ACK75562.1"/>
    <property type="molecule type" value="Genomic_DNA"/>
</dbReference>
<dbReference type="EMBL" id="FJ486156">
    <property type="protein sequence ID" value="ACK75563.1"/>
    <property type="molecule type" value="Genomic_DNA"/>
</dbReference>
<dbReference type="EMBL" id="FJ486157">
    <property type="protein sequence ID" value="ACK75564.1"/>
    <property type="molecule type" value="Genomic_DNA"/>
</dbReference>
<dbReference type="EMBL" id="FJ486158">
    <property type="protein sequence ID" value="ACK75565.1"/>
    <property type="molecule type" value="Genomic_DNA"/>
</dbReference>
<dbReference type="EMBL" id="FJ486159">
    <property type="protein sequence ID" value="ACK75566.1"/>
    <property type="molecule type" value="Genomic_DNA"/>
</dbReference>
<dbReference type="EMBL" id="FJ486160">
    <property type="protein sequence ID" value="ACK75567.1"/>
    <property type="molecule type" value="Genomic_DNA"/>
</dbReference>
<dbReference type="EMBL" id="FJ486161">
    <property type="protein sequence ID" value="ACK75568.1"/>
    <property type="molecule type" value="Genomic_DNA"/>
</dbReference>
<dbReference type="EMBL" id="FJ486162">
    <property type="protein sequence ID" value="ACK75569.1"/>
    <property type="molecule type" value="Genomic_DNA"/>
</dbReference>
<dbReference type="EMBL" id="FJ486163">
    <property type="protein sequence ID" value="ACK75570.1"/>
    <property type="molecule type" value="Genomic_DNA"/>
</dbReference>
<dbReference type="EMBL" id="FJ486164">
    <property type="protein sequence ID" value="ACK75571.1"/>
    <property type="molecule type" value="Genomic_DNA"/>
</dbReference>
<dbReference type="EMBL" id="FJ486165">
    <property type="protein sequence ID" value="ACK75572.1"/>
    <property type="molecule type" value="Genomic_DNA"/>
</dbReference>
<dbReference type="EMBL" id="KX279464">
    <property type="protein sequence ID" value="APG33180.1"/>
    <property type="molecule type" value="Genomic_DNA"/>
</dbReference>
<dbReference type="EMBL" id="AL031284">
    <property type="status" value="NOT_ANNOTATED_CDS"/>
    <property type="molecule type" value="Genomic_DNA"/>
</dbReference>
<dbReference type="EMBL" id="AL928711">
    <property type="status" value="NOT_ANNOTATED_CDS"/>
    <property type="molecule type" value="Genomic_DNA"/>
</dbReference>
<dbReference type="EMBL" id="BC075081">
    <property type="protein sequence ID" value="AAH75081.1"/>
    <property type="molecule type" value="mRNA"/>
</dbReference>
<dbReference type="EMBL" id="BC139905">
    <property type="protein sequence ID" value="AAI39906.1"/>
    <property type="molecule type" value="mRNA"/>
</dbReference>
<dbReference type="EMBL" id="S70456">
    <property type="protein sequence ID" value="AAD14061.1"/>
    <property type="molecule type" value="Genomic_DNA"/>
</dbReference>
<dbReference type="EMBL" id="BN000065">
    <property type="protein sequence ID" value="CAD29850.1"/>
    <property type="molecule type" value="Genomic_DNA"/>
</dbReference>
<dbReference type="CCDS" id="CCDS30634.1">
    <molecule id="P18577-4"/>
</dbReference>
<dbReference type="CCDS" id="CCDS30635.1">
    <molecule id="P18577-1"/>
</dbReference>
<dbReference type="CCDS" id="CCDS30636.1">
    <molecule id="P18577-3"/>
</dbReference>
<dbReference type="CCDS" id="CCDS30637.1">
    <molecule id="P18577-2"/>
</dbReference>
<dbReference type="CCDS" id="CCDS81283.1">
    <molecule id="P18577-5"/>
</dbReference>
<dbReference type="PIR" id="A30405">
    <property type="entry name" value="A30405"/>
</dbReference>
<dbReference type="PIR" id="I54193">
    <property type="entry name" value="I54193"/>
</dbReference>
<dbReference type="PIR" id="PC2032">
    <property type="entry name" value="PC2032"/>
</dbReference>
<dbReference type="PIR" id="PC2033">
    <property type="entry name" value="PC2033"/>
</dbReference>
<dbReference type="PIR" id="S78478">
    <property type="entry name" value="S78478"/>
</dbReference>
<dbReference type="PIR" id="S78479">
    <property type="entry name" value="S78479"/>
</dbReference>
<dbReference type="PIR" id="S78480">
    <property type="entry name" value="S78480"/>
</dbReference>
<dbReference type="RefSeq" id="NP_065231.4">
    <molecule id="P18577-1"/>
    <property type="nucleotide sequence ID" value="NM_020485.8"/>
</dbReference>
<dbReference type="RefSeq" id="NP_619523.3">
    <property type="nucleotide sequence ID" value="NM_138617.3"/>
</dbReference>
<dbReference type="PDB" id="7UZQ">
    <property type="method" value="EM"/>
    <property type="resolution" value="2.17 A"/>
    <property type="chains" value="K=1-417"/>
</dbReference>
<dbReference type="PDB" id="7V0K">
    <property type="method" value="EM"/>
    <property type="resolution" value="2.40 A"/>
    <property type="chains" value="K=1-417"/>
</dbReference>
<dbReference type="PDB" id="7V0S">
    <property type="method" value="EM"/>
    <property type="resolution" value="2.50 A"/>
    <property type="chains" value="K=1-417"/>
</dbReference>
<dbReference type="PDB" id="8CRT">
    <property type="method" value="EM"/>
    <property type="resolution" value="3.00 A"/>
    <property type="chains" value="K=1-417"/>
</dbReference>
<dbReference type="PDB" id="8CS9">
    <property type="method" value="EM"/>
    <property type="resolution" value="2.74 A"/>
    <property type="chains" value="K=1-417"/>
</dbReference>
<dbReference type="PDB" id="8CSL">
    <property type="method" value="EM"/>
    <property type="resolution" value="25.00 A"/>
    <property type="chains" value="K=1-417"/>
</dbReference>
<dbReference type="PDB" id="8CSX">
    <property type="method" value="EM"/>
    <property type="resolution" value="2.40 A"/>
    <property type="chains" value="K=1-417"/>
</dbReference>
<dbReference type="PDB" id="8CTE">
    <property type="method" value="EM"/>
    <property type="resolution" value="2.90 A"/>
    <property type="chains" value="K=1-417"/>
</dbReference>
<dbReference type="PDBsum" id="7UZQ"/>
<dbReference type="PDBsum" id="7V0K"/>
<dbReference type="PDBsum" id="7V0S"/>
<dbReference type="PDBsum" id="8CRT"/>
<dbReference type="PDBsum" id="8CS9"/>
<dbReference type="PDBsum" id="8CSL"/>
<dbReference type="PDBsum" id="8CSX"/>
<dbReference type="PDBsum" id="8CTE"/>
<dbReference type="EMDB" id="EMD-26916"/>
<dbReference type="EMDB" id="EMD-26943"/>
<dbReference type="EMDB" id="EMD-26949"/>
<dbReference type="EMDB" id="EMD-26958"/>
<dbReference type="EMDB" id="EMD-26960"/>
<dbReference type="EMDB" id="EMD-26965"/>
<dbReference type="EMDB" id="EMD-26974"/>
<dbReference type="EMDB" id="EMD-26988"/>
<dbReference type="SMR" id="P18577"/>
<dbReference type="FunCoup" id="P18577">
    <property type="interactions" value="56"/>
</dbReference>
<dbReference type="STRING" id="9606.ENSP00000294413"/>
<dbReference type="TCDB" id="1.A.11.4.3">
    <property type="family name" value="the ammonium transporter channel (amt) family"/>
</dbReference>
<dbReference type="iPTMnet" id="P18577"/>
<dbReference type="PhosphoSitePlus" id="P18577"/>
<dbReference type="BioMuta" id="RHCE"/>
<dbReference type="DMDM" id="132558"/>
<dbReference type="jPOST" id="P18577"/>
<dbReference type="MassIVE" id="P18577"/>
<dbReference type="PaxDb" id="9606-ENSP00000294413"/>
<dbReference type="PeptideAtlas" id="P18577"/>
<dbReference type="ProteomicsDB" id="53578">
    <molecule id="P18577-1"/>
</dbReference>
<dbReference type="ProteomicsDB" id="53579">
    <molecule id="P18577-10"/>
</dbReference>
<dbReference type="ProteomicsDB" id="53580">
    <molecule id="P18577-11"/>
</dbReference>
<dbReference type="ProteomicsDB" id="53583">
    <molecule id="P18577-14"/>
</dbReference>
<dbReference type="ProteomicsDB" id="53584">
    <molecule id="P18577-2"/>
</dbReference>
<dbReference type="ProteomicsDB" id="53586">
    <molecule id="P18577-4"/>
</dbReference>
<dbReference type="ProteomicsDB" id="53587">
    <molecule id="P18577-5"/>
</dbReference>
<dbReference type="ProteomicsDB" id="53588">
    <molecule id="P18577-6"/>
</dbReference>
<dbReference type="ProteomicsDB" id="53589">
    <molecule id="P18577-7"/>
</dbReference>
<dbReference type="ProteomicsDB" id="53590">
    <molecule id="P18577-8"/>
</dbReference>
<dbReference type="ProteomicsDB" id="53591">
    <molecule id="P18577-9"/>
</dbReference>
<dbReference type="ABCD" id="P18577">
    <property type="antibodies" value="5 sequenced antibodies"/>
</dbReference>
<dbReference type="Antibodypedia" id="15860">
    <property type="antibodies" value="141 antibodies from 26 providers"/>
</dbReference>
<dbReference type="DNASU" id="6006"/>
<dbReference type="Ensembl" id="ENST00000294413.13">
    <molecule id="P18577-1"/>
    <property type="protein sequence ID" value="ENSP00000294413.6"/>
    <property type="gene ID" value="ENSG00000188672.19"/>
</dbReference>
<dbReference type="Ensembl" id="ENST00000340849.8">
    <molecule id="P18577-3"/>
    <property type="protein sequence ID" value="ENSP00000345084.4"/>
    <property type="gene ID" value="ENSG00000188672.19"/>
</dbReference>
<dbReference type="Ensembl" id="ENST00000346452.8">
    <molecule id="P18577-4"/>
    <property type="protein sequence ID" value="ENSP00000344485.4"/>
    <property type="gene ID" value="ENSG00000188672.19"/>
</dbReference>
<dbReference type="Ensembl" id="ENST00000349438.8">
    <molecule id="P18577-2"/>
    <property type="protein sequence ID" value="ENSP00000334570.5"/>
    <property type="gene ID" value="ENSG00000188672.19"/>
</dbReference>
<dbReference type="Ensembl" id="ENST00000413854.5">
    <molecule id="P18577-5"/>
    <property type="protein sequence ID" value="ENSP00000415417.2"/>
    <property type="gene ID" value="ENSG00000188672.19"/>
</dbReference>
<dbReference type="GeneID" id="6006"/>
<dbReference type="KEGG" id="hsa:6006"/>
<dbReference type="MANE-Select" id="ENST00000294413.13">
    <property type="protein sequence ID" value="ENSP00000294413.6"/>
    <property type="RefSeq nucleotide sequence ID" value="NM_020485.8"/>
    <property type="RefSeq protein sequence ID" value="NP_065231.4"/>
</dbReference>
<dbReference type="UCSC" id="uc001bkf.4">
    <molecule id="P18577-1"/>
    <property type="organism name" value="human"/>
</dbReference>
<dbReference type="AGR" id="HGNC:10008"/>
<dbReference type="CTD" id="6006"/>
<dbReference type="DisGeNET" id="6006"/>
<dbReference type="GeneCards" id="RHCE"/>
<dbReference type="HGNC" id="HGNC:10008">
    <property type="gene designation" value="RHCE"/>
</dbReference>
<dbReference type="HPA" id="ENSG00000188672">
    <property type="expression patterns" value="Tissue enriched (bone)"/>
</dbReference>
<dbReference type="MalaCards" id="RHCE"/>
<dbReference type="MIM" id="111700">
    <property type="type" value="gene"/>
</dbReference>
<dbReference type="MIM" id="617970">
    <property type="type" value="phenotype"/>
</dbReference>
<dbReference type="neXtProt" id="NX_P18577"/>
<dbReference type="OpenTargets" id="ENSG00000188672"/>
<dbReference type="Orphanet" id="71275">
    <property type="disease" value="Rh deficiency syndrome"/>
</dbReference>
<dbReference type="PharmGKB" id="PA34386"/>
<dbReference type="VEuPathDB" id="HostDB:ENSG00000188672"/>
<dbReference type="eggNOG" id="KOG3796">
    <property type="taxonomic scope" value="Eukaryota"/>
</dbReference>
<dbReference type="GeneTree" id="ENSGT00950000182844"/>
<dbReference type="HOGENOM" id="CLU_021386_1_0_1"/>
<dbReference type="InParanoid" id="P18577"/>
<dbReference type="OMA" id="IHVFATY"/>
<dbReference type="OrthoDB" id="534912at2759"/>
<dbReference type="PAN-GO" id="P18577">
    <property type="GO annotations" value="4 GO annotations based on evolutionary models"/>
</dbReference>
<dbReference type="PhylomeDB" id="P18577"/>
<dbReference type="TreeFam" id="TF314450"/>
<dbReference type="PathwayCommons" id="P18577"/>
<dbReference type="Reactome" id="R-HSA-9037628">
    <property type="pathway name" value="Rhesus blood group biosynthesis"/>
</dbReference>
<dbReference type="SIGNOR" id="P18577"/>
<dbReference type="BioGRID-ORCS" id="6006">
    <property type="hits" value="19 hits in 1148 CRISPR screens"/>
</dbReference>
<dbReference type="ChiTaRS" id="RHCE">
    <property type="organism name" value="human"/>
</dbReference>
<dbReference type="GeneWiki" id="RHCE_(gene)"/>
<dbReference type="GenomeRNAi" id="6006"/>
<dbReference type="Pharos" id="P18577">
    <property type="development level" value="Tbio"/>
</dbReference>
<dbReference type="PRO" id="PR:P18577"/>
<dbReference type="Proteomes" id="UP000005640">
    <property type="component" value="Chromosome 1"/>
</dbReference>
<dbReference type="RNAct" id="P18577">
    <property type="molecule type" value="protein"/>
</dbReference>
<dbReference type="Bgee" id="ENSG00000188672">
    <property type="expression patterns" value="Expressed in trabecular bone tissue and 107 other cell types or tissues"/>
</dbReference>
<dbReference type="ExpressionAtlas" id="P18577">
    <property type="expression patterns" value="baseline and differential"/>
</dbReference>
<dbReference type="GO" id="GO:0170014">
    <property type="term" value="C:ankyrin-1 complex"/>
    <property type="evidence" value="ECO:0000314"/>
    <property type="project" value="UniProtKB"/>
</dbReference>
<dbReference type="GO" id="GO:0005886">
    <property type="term" value="C:plasma membrane"/>
    <property type="evidence" value="ECO:0000318"/>
    <property type="project" value="GO_Central"/>
</dbReference>
<dbReference type="GO" id="GO:0008519">
    <property type="term" value="F:ammonium channel activity"/>
    <property type="evidence" value="ECO:0000318"/>
    <property type="project" value="GO_Central"/>
</dbReference>
<dbReference type="GO" id="GO:0097272">
    <property type="term" value="P:ammonium homeostasis"/>
    <property type="evidence" value="ECO:0000318"/>
    <property type="project" value="GO_Central"/>
</dbReference>
<dbReference type="GO" id="GO:0072488">
    <property type="term" value="P:ammonium transmembrane transport"/>
    <property type="evidence" value="ECO:0000318"/>
    <property type="project" value="GO_Central"/>
</dbReference>
<dbReference type="FunFam" id="1.10.3430.10:FF:000009">
    <property type="entry name" value="Blood group Rh(D) polypeptide"/>
    <property type="match status" value="1"/>
</dbReference>
<dbReference type="Gene3D" id="1.10.3430.10">
    <property type="entry name" value="Ammonium transporter AmtB like domains"/>
    <property type="match status" value="1"/>
</dbReference>
<dbReference type="InterPro" id="IPR029020">
    <property type="entry name" value="Ammonium/urea_transptr"/>
</dbReference>
<dbReference type="InterPro" id="IPR024041">
    <property type="entry name" value="NH4_transpt_AmtB-like_dom"/>
</dbReference>
<dbReference type="InterPro" id="IPR002229">
    <property type="entry name" value="RhesusRHD"/>
</dbReference>
<dbReference type="PANTHER" id="PTHR11730">
    <property type="entry name" value="AMMONIUM TRANSPORTER"/>
    <property type="match status" value="1"/>
</dbReference>
<dbReference type="PANTHER" id="PTHR11730:SF43">
    <property type="entry name" value="BLOOD GROUP RH(CE) POLYPEPTIDE-RELATED"/>
    <property type="match status" value="1"/>
</dbReference>
<dbReference type="Pfam" id="PF00909">
    <property type="entry name" value="Ammonium_transp"/>
    <property type="match status" value="1"/>
</dbReference>
<dbReference type="PRINTS" id="PR00342">
    <property type="entry name" value="RHESUSRHD"/>
</dbReference>
<dbReference type="SUPFAM" id="SSF111352">
    <property type="entry name" value="Ammonium transporter"/>
    <property type="match status" value="1"/>
</dbReference>
<reference key="1">
    <citation type="journal article" date="1990" name="Biochem. J.">
        <title>cDNA cloning of a 30 kDa erythrocyte membrane protein associated with Rh (Rhesus)-blood-group-antigen expression.</title>
        <authorList>
            <person name="Avent N.D."/>
            <person name="Ridgwell K."/>
            <person name="Tanner M.J.A."/>
            <person name="Anstee D.J."/>
        </authorList>
    </citation>
    <scope>NUCLEOTIDE SEQUENCE [MRNA] (ISOFORM RHI)</scope>
    <scope>VARIANTS TRP-16 AND PRO-226</scope>
    <source>
        <tissue>Bone marrow</tissue>
    </source>
</reference>
<reference key="2">
    <citation type="journal article" date="1990" name="Proc. Natl. Acad. Sci. U.S.A.">
        <title>Molecular cloning and protein structure of a human blood group Rh polypeptide.</title>
        <authorList>
            <person name="Cherif-Zahar B."/>
            <person name="Bloy C."/>
            <person name="le van Kim C."/>
            <person name="Blanchard D."/>
            <person name="Bailly P."/>
            <person name="Hermand P."/>
            <person name="Salmon C."/>
            <person name="Cartron J.-P."/>
            <person name="Colin Y."/>
        </authorList>
    </citation>
    <scope>NUCLEOTIDE SEQUENCE [MRNA] (ISOFORM RHI)</scope>
    <scope>PARTIAL PROTEIN SEQUENCE</scope>
    <scope>VARIANTS TRP-16 AND PRO-226</scope>
    <source>
        <tissue>Bone marrow</tissue>
    </source>
</reference>
<reference key="3">
    <citation type="journal article" date="1992" name="Blood">
        <title>Multiple Rh messenger RNA isoforms are produced by alternative splicing.</title>
        <authorList>
            <person name="le van Kim C."/>
            <person name="Cherif-Zahar B."/>
            <person name="Raynal V."/>
            <person name="Mouro I."/>
            <person name="Lopez M."/>
            <person name="Cartron J.-P."/>
            <person name="Colin Y."/>
        </authorList>
    </citation>
    <scope>NUCLEOTIDE SEQUENCE [MRNA] (ISOFORMS RHIV; RHVI AND RHVIII)</scope>
    <scope>VARIANT TRP-16</scope>
    <source>
        <tissue>Bone marrow</tissue>
    </source>
</reference>
<reference key="4">
    <citation type="journal article" date="1993" name="Hum. Genet.">
        <title>Isolation of a new cDNA clone encoding an Rh polypeptide associated with the Rh blood group system.</title>
        <authorList>
            <person name="Kajii E."/>
            <person name="Umenishi F."/>
            <person name="Iwamoto S."/>
            <person name="Ikemoto S."/>
        </authorList>
    </citation>
    <scope>NUCLEOTIDE SEQUENCE [MRNA] (ISOFORM RHI)</scope>
    <scope>VARIANTS TRP-16 AND PRO-226</scope>
</reference>
<reference key="5">
    <citation type="journal article" date="2001" name="Br. J. Haematol.">
        <title>16Cys encoded by the RHce gene is associated with altered expression of the e antigen and is frequent in the R0 haplotype.</title>
        <authorList>
            <person name="Westhoff C.M."/>
            <person name="Silberstein L.E."/>
            <person name="Wylie D.E."/>
            <person name="Skavdahl M."/>
            <person name="Reid M.E."/>
        </authorList>
    </citation>
    <scope>NUCLEOTIDE SEQUENCE [MRNA] (ISOFORM RHI)</scope>
    <scope>VARIANT E/RH3 ANTIGEN PRO-226</scope>
    <scope>POLYMORPHISM</scope>
</reference>
<reference key="6">
    <citation type="journal article" date="2001" name="Transfusion">
        <title>E variants found in Japanese and c antigenicity alteration without substitution in the second extracellular loop.</title>
        <authorList>
            <person name="Kashiwase K."/>
            <person name="Ishikawa Y."/>
            <person name="Hyodo H."/>
            <person name="Watanabe Y."/>
            <person name="Ogawa A."/>
            <person name="Tsuneyama H."/>
            <person name="Toyoda C."/>
            <person name="Uchikawa M."/>
            <person name="Akaza T."/>
            <person name="Omine M."/>
            <person name="Juji T."/>
        </authorList>
    </citation>
    <scope>NUCLEOTIDE SEQUENCE [MRNA] (ISOFORM RHI)</scope>
    <scope>VARIANTS TRP-16; ILE-60; SER-68; SER-103; VAL-127; ASP-128; THR-154; PRO-226; GLU-233 AND VAL-238</scope>
</reference>
<reference key="7">
    <citation type="journal article" date="2002" name="Blood">
        <title>Rare RHCE phenotypes in black individuals of Afro-Caribbean origin: identification and transfusion safety.</title>
        <authorList>
            <person name="Noizat-Pirenne F."/>
            <person name="Lee K."/>
            <person name="Le Pennec P.-Y."/>
            <person name="Simon P."/>
            <person name="Kazup P."/>
            <person name="Bachir D."/>
            <person name="Rouzaud A.M."/>
            <person name="Roussel M."/>
            <person name="Juszczak G."/>
            <person name="Menanteau C."/>
            <person name="Rouger P."/>
            <person name="Kotb R."/>
            <person name="Cartron J.-P."/>
            <person name="Ansart-Pirenne H."/>
        </authorList>
    </citation>
    <scope>NUCLEOTIDE SEQUENCE [MRNA] (ISOFORM RHI)</scope>
    <scope>VARIANTS TRP-16; VAL-238; VAL-245; GLY-263 AND LYS-267</scope>
</reference>
<reference key="8">
    <citation type="submission" date="2004-04" db="EMBL/GenBank/DDBJ databases">
        <title>A new RhCe allele in Chinese Han population.</title>
        <authorList>
            <person name="Yan L."/>
            <person name="Xu X."/>
            <person name="Zhu F."/>
        </authorList>
    </citation>
    <scope>NUCLEOTIDE SEQUENCE [MRNA] (ISOFORM RHI)</scope>
    <scope>VARIANTS ILE-60; SER-68 AND SER-103</scope>
</reference>
<reference key="9">
    <citation type="submission" date="2005-08" db="EMBL/GenBank/DDBJ databases">
        <title>Molecular basis for Crawford antigen expression.</title>
        <authorList>
            <person name="Westhoff C.M."/>
            <person name="Vege S."/>
        </authorList>
    </citation>
    <scope>NUCLEOTIDE SEQUENCE [MRNA] (ISOFORM RHI)</scope>
    <scope>VARIANTS TRP-16; PRO-226; GLU-233 AND VAL-245</scope>
</reference>
<reference key="10">
    <citation type="submission" date="2005-10" db="EMBL/GenBank/DDBJ databases">
        <title>RHCE gene, allele CE, antigen CE.</title>
        <authorList>
            <person name="Vege S."/>
            <person name="Westhoff C.M."/>
        </authorList>
    </citation>
    <scope>NUCLEOTIDE SEQUENCE [MRNA] (ISOFORM RHI)</scope>
    <scope>VARIANTS TRP-16; ILE-60; SER-68; SER-103 AND PRO-226</scope>
</reference>
<reference key="11">
    <citation type="submission" date="2005-12" db="EMBL/GenBank/DDBJ databases">
        <title>RHCE gene, allele RHce, ce antigen.</title>
        <authorList>
            <person name="Westhoff C.M."/>
            <person name="Vege S."/>
        </authorList>
    </citation>
    <scope>NUCLEOTIDE SEQUENCE [MRNA] (ISOFORM RHI)</scope>
</reference>
<reference key="12">
    <citation type="submission" date="2006-08" db="EMBL/GenBank/DDBJ databases">
        <title>RHD allele and RH haplotype distribution in Tibetans.</title>
        <authorList>
            <person name="Wei Q."/>
            <person name="Flegel W.A."/>
        </authorList>
    </citation>
    <scope>NUCLEOTIDE SEQUENCE [GENOMIC DNA]</scope>
    <scope>VARIANTS TRP-16; ILE-60; SER-68; SER-103; PRO-226 AND GLU-398</scope>
</reference>
<reference key="13">
    <citation type="submission" date="2008-11" db="EMBL/GenBank/DDBJ databases">
        <authorList>
            <person name="Bugert P."/>
            <person name="Scharberg E.A."/>
            <person name="Geisen C."/>
            <person name="von Zabern I."/>
            <person name="Flegel W.A."/>
        </authorList>
    </citation>
    <scope>NUCLEOTIDE SEQUENCE [GENOMIC DNA]</scope>
    <scope>VARIANTS TRP-16; ILE-60; SER-68; SER-103; PRO-226 AND LYS-267</scope>
</reference>
<reference key="14">
    <citation type="submission" date="2016-05" db="EMBL/GenBank/DDBJ databases">
        <title>Identification of new RH alleles associated with blood typing discrepancies among the french population.</title>
        <authorList>
            <person name="Vrignaud C."/>
            <person name="Peyrard T."/>
        </authorList>
    </citation>
    <scope>NUCLEOTIDE SEQUENCE [GENOMIC DNA]</scope>
</reference>
<reference key="15">
    <citation type="journal article" date="2006" name="Nature">
        <title>The DNA sequence and biological annotation of human chromosome 1.</title>
        <authorList>
            <person name="Gregory S.G."/>
            <person name="Barlow K.F."/>
            <person name="McLay K.E."/>
            <person name="Kaul R."/>
            <person name="Swarbreck D."/>
            <person name="Dunham A."/>
            <person name="Scott C.E."/>
            <person name="Howe K.L."/>
            <person name="Woodfine K."/>
            <person name="Spencer C.C.A."/>
            <person name="Jones M.C."/>
            <person name="Gillson C."/>
            <person name="Searle S."/>
            <person name="Zhou Y."/>
            <person name="Kokocinski F."/>
            <person name="McDonald L."/>
            <person name="Evans R."/>
            <person name="Phillips K."/>
            <person name="Atkinson A."/>
            <person name="Cooper R."/>
            <person name="Jones C."/>
            <person name="Hall R.E."/>
            <person name="Andrews T.D."/>
            <person name="Lloyd C."/>
            <person name="Ainscough R."/>
            <person name="Almeida J.P."/>
            <person name="Ambrose K.D."/>
            <person name="Anderson F."/>
            <person name="Andrew R.W."/>
            <person name="Ashwell R.I.S."/>
            <person name="Aubin K."/>
            <person name="Babbage A.K."/>
            <person name="Bagguley C.L."/>
            <person name="Bailey J."/>
            <person name="Beasley H."/>
            <person name="Bethel G."/>
            <person name="Bird C.P."/>
            <person name="Bray-Allen S."/>
            <person name="Brown J.Y."/>
            <person name="Brown A.J."/>
            <person name="Buckley D."/>
            <person name="Burton J."/>
            <person name="Bye J."/>
            <person name="Carder C."/>
            <person name="Chapman J.C."/>
            <person name="Clark S.Y."/>
            <person name="Clarke G."/>
            <person name="Clee C."/>
            <person name="Cobley V."/>
            <person name="Collier R.E."/>
            <person name="Corby N."/>
            <person name="Coville G.J."/>
            <person name="Davies J."/>
            <person name="Deadman R."/>
            <person name="Dunn M."/>
            <person name="Earthrowl M."/>
            <person name="Ellington A.G."/>
            <person name="Errington H."/>
            <person name="Frankish A."/>
            <person name="Frankland J."/>
            <person name="French L."/>
            <person name="Garner P."/>
            <person name="Garnett J."/>
            <person name="Gay L."/>
            <person name="Ghori M.R.J."/>
            <person name="Gibson R."/>
            <person name="Gilby L.M."/>
            <person name="Gillett W."/>
            <person name="Glithero R.J."/>
            <person name="Grafham D.V."/>
            <person name="Griffiths C."/>
            <person name="Griffiths-Jones S."/>
            <person name="Grocock R."/>
            <person name="Hammond S."/>
            <person name="Harrison E.S.I."/>
            <person name="Hart E."/>
            <person name="Haugen E."/>
            <person name="Heath P.D."/>
            <person name="Holmes S."/>
            <person name="Holt K."/>
            <person name="Howden P.J."/>
            <person name="Hunt A.R."/>
            <person name="Hunt S.E."/>
            <person name="Hunter G."/>
            <person name="Isherwood J."/>
            <person name="James R."/>
            <person name="Johnson C."/>
            <person name="Johnson D."/>
            <person name="Joy A."/>
            <person name="Kay M."/>
            <person name="Kershaw J.K."/>
            <person name="Kibukawa M."/>
            <person name="Kimberley A.M."/>
            <person name="King A."/>
            <person name="Knights A.J."/>
            <person name="Lad H."/>
            <person name="Laird G."/>
            <person name="Lawlor S."/>
            <person name="Leongamornlert D.A."/>
            <person name="Lloyd D.M."/>
            <person name="Loveland J."/>
            <person name="Lovell J."/>
            <person name="Lush M.J."/>
            <person name="Lyne R."/>
            <person name="Martin S."/>
            <person name="Mashreghi-Mohammadi M."/>
            <person name="Matthews L."/>
            <person name="Matthews N.S.W."/>
            <person name="McLaren S."/>
            <person name="Milne S."/>
            <person name="Mistry S."/>
            <person name="Moore M.J.F."/>
            <person name="Nickerson T."/>
            <person name="O'Dell C.N."/>
            <person name="Oliver K."/>
            <person name="Palmeiri A."/>
            <person name="Palmer S.A."/>
            <person name="Parker A."/>
            <person name="Patel D."/>
            <person name="Pearce A.V."/>
            <person name="Peck A.I."/>
            <person name="Pelan S."/>
            <person name="Phelps K."/>
            <person name="Phillimore B.J."/>
            <person name="Plumb R."/>
            <person name="Rajan J."/>
            <person name="Raymond C."/>
            <person name="Rouse G."/>
            <person name="Saenphimmachak C."/>
            <person name="Sehra H.K."/>
            <person name="Sheridan E."/>
            <person name="Shownkeen R."/>
            <person name="Sims S."/>
            <person name="Skuce C.D."/>
            <person name="Smith M."/>
            <person name="Steward C."/>
            <person name="Subramanian S."/>
            <person name="Sycamore N."/>
            <person name="Tracey A."/>
            <person name="Tromans A."/>
            <person name="Van Helmond Z."/>
            <person name="Wall M."/>
            <person name="Wallis J.M."/>
            <person name="White S."/>
            <person name="Whitehead S.L."/>
            <person name="Wilkinson J.E."/>
            <person name="Willey D.L."/>
            <person name="Williams H."/>
            <person name="Wilming L."/>
            <person name="Wray P.W."/>
            <person name="Wu Z."/>
            <person name="Coulson A."/>
            <person name="Vaudin M."/>
            <person name="Sulston J.E."/>
            <person name="Durbin R.M."/>
            <person name="Hubbard T."/>
            <person name="Wooster R."/>
            <person name="Dunham I."/>
            <person name="Carter N.P."/>
            <person name="McVean G."/>
            <person name="Ross M.T."/>
            <person name="Harrow J."/>
            <person name="Olson M.V."/>
            <person name="Beck S."/>
            <person name="Rogers J."/>
            <person name="Bentley D.R."/>
        </authorList>
    </citation>
    <scope>NUCLEOTIDE SEQUENCE [LARGE SCALE GENOMIC DNA]</scope>
</reference>
<reference key="16">
    <citation type="journal article" date="2004" name="Genome Res.">
        <title>The status, quality, and expansion of the NIH full-length cDNA project: the Mammalian Gene Collection (MGC).</title>
        <authorList>
            <consortium name="The MGC Project Team"/>
        </authorList>
    </citation>
    <scope>NUCLEOTIDE SEQUENCE [LARGE SCALE MRNA] (ISOFORM RHI)</scope>
    <scope>VARIANTS ILE-60; SER-68 AND SER-103</scope>
    <source>
        <tissue>Brain</tissue>
    </source>
</reference>
<reference key="17">
    <citation type="journal article" date="1994" name="Genomics">
        <title>Organization of the gene (RHCE) encoding the human blood group RhCcEe antigens and characterization of the promoter region.</title>
        <authorList>
            <person name="Cherif-Zahar B."/>
            <person name="le van Kim C."/>
            <person name="Rouillac C."/>
            <person name="Raynal V."/>
            <person name="Cartron J.-P."/>
            <person name="Colin Y."/>
        </authorList>
    </citation>
    <scope>NUCLEOTIDE SEQUENCE [GENOMIC DNA] OF 1-11</scope>
</reference>
<reference key="18">
    <citation type="journal article" date="1988" name="Biochem. J.">
        <title>Protein-sequence studies on Rh-related polypeptides suggest the presence of at least two groups of proteins which associate in the human red-cell membrane.</title>
        <authorList>
            <person name="Avent N.D."/>
            <person name="Ridgwell K."/>
            <person name="Mawby W.J."/>
            <person name="Tanner M.J.A."/>
            <person name="Anstee D.J."/>
            <person name="Kumpel B."/>
        </authorList>
    </citation>
    <scope>PROTEIN SEQUENCE OF 2-33</scope>
</reference>
<reference key="19">
    <citation type="journal article" date="1988" name="Blood">
        <title>Determination of the N-terminal sequence of human red cell Rh(D) polypeptide and demonstration that the Rh(D), (c), and (E) antigens are carried by distinct polypeptide chains.</title>
        <authorList>
            <person name="Bloy C."/>
            <person name="Blanchard D."/>
            <person name="Dahr W."/>
            <person name="Beyreuther K."/>
            <person name="Salmon C."/>
            <person name="Cartron J.-P."/>
        </authorList>
    </citation>
    <scope>PROTEIN SEQUENCE OF 2-17</scope>
</reference>
<reference key="20">
    <citation type="journal article" date="1995" name="Hum. Genet.">
        <title>Intricate combinatorial patterns of exon splicing generate multiple Rh-related isoforms in human erythroid cells.</title>
        <authorList>
            <person name="Kajii E."/>
            <person name="Umenishi F."/>
            <person name="Omi T."/>
            <person name="Ikemoto S."/>
        </authorList>
    </citation>
    <scope>NUCLEOTIDE SEQUENCE [MRNA] OF 141-417 (ISOFORMS 1C; 1D; 1H; 2E; 4G; 7A; 8A; 8E; 8H; RHIV AND RHVI)</scope>
    <scope>ALTERNATIVE SPLICING</scope>
    <source>
        <tissue>Blood</tissue>
    </source>
</reference>
<reference key="21">
    <citation type="journal article" date="1994" name="Biochem. Biophys. Res. Commun.">
        <title>Identification of two Rh mRNA isoforms expressed in immature erythroblasts.</title>
        <authorList>
            <person name="Umenishi F."/>
            <person name="Kajii E."/>
            <person name="Ikemoto S."/>
        </authorList>
    </citation>
    <scope>NUCLEOTIDE SEQUENCE [MRNA] OF 201-417 (ISOFORMS 4G AND RHPI-ALPHA)</scope>
    <scope>TISSUE SPECIFICITY</scope>
    <source>
        <tissue>Erythroblast</tissue>
    </source>
</reference>
<reference key="22">
    <citation type="journal article" date="1991" name="Blood">
        <title>Regarding the size of Rh proteins.</title>
        <authorList>
            <person name="Suyama K."/>
            <person name="Goldstein J."/>
            <person name="Aebersold R."/>
            <person name="Kent S."/>
        </authorList>
    </citation>
    <scope>PROTEIN SEQUENCE OF 402-409</scope>
</reference>
<reference key="23">
    <citation type="journal article" date="1998" name="Blood">
        <title>Rhnull disease: the amorph type results from a novel double mutation in RhCe gene on D-negative background.</title>
        <authorList>
            <person name="Huang C.H."/>
            <person name="Chen Y."/>
            <person name="Reid M.E."/>
            <person name="Seidl C."/>
        </authorList>
    </citation>
    <scope>INVOLVEMENT IN RHNA</scope>
</reference>
<reference key="24">
    <citation type="journal article" date="2002" name="Blood">
        <title>RHCE represents the ancestral RH position, while RHD is the duplicated gene.</title>
        <authorList>
            <person name="Wagner F.F."/>
            <person name="Flegel W.A."/>
        </authorList>
    </citation>
    <scope>IDENTIFICATION</scope>
</reference>
<reference key="25">
    <citation type="journal article" date="2015" name="Transfusion">
        <title>Short duplication within the RHCE gene associated with an in cis deleted RHD causing a Rhnull amorph phenotype in an immunized pregnant woman with anti-Rh29.</title>
        <authorList>
            <person name="Silvy M."/>
            <person name="Beley S."/>
            <person name="Peyrard T."/>
            <person name="Ouchari M."/>
            <person name="Abdelkefi S."/>
            <person name="Jemni Yacoub S."/>
            <person name="Chiaroni J."/>
            <person name="Bailly P."/>
        </authorList>
    </citation>
    <scope>INVOLVEMENT IN RHNA</scope>
</reference>
<reference evidence="27 28 29 30 31 32 33 34" key="26">
    <citation type="journal article" date="2022" name="Nat. Struct. Mol. Biol.">
        <title>Architecture of the human erythrocyte ankyrin-1 complex.</title>
        <authorList>
            <person name="Vallese F."/>
            <person name="Kim K."/>
            <person name="Yen L.Y."/>
            <person name="Johnston J.D."/>
            <person name="Noble A.J."/>
            <person name="Cali T."/>
            <person name="Clarke O.B."/>
        </authorList>
    </citation>
    <scope>STRUCTURE BY ELECTRON MICROSCOPY (2.17 ANGSTROMS)</scope>
    <scope>FUNCTION</scope>
    <scope>SUBUNIT</scope>
    <scope>ANKYRIN-1 COMPLEX IDENTIFICATION</scope>
    <scope>INTERACTION WITH RHAG AND ANK1</scope>
</reference>
<reference key="27">
    <citation type="journal article" date="1993" name="Nat. Genet.">
        <title>Molecular genetic basis of the human Rhesus blood group system.</title>
        <authorList>
            <person name="Mouro I."/>
            <person name="Colin Y."/>
            <person name="Cherif-Zahar B."/>
            <person name="Cartron J.-P."/>
            <person name="le van Kim C."/>
        </authorList>
    </citation>
    <scope>VARIANTS TRP-16; ILE-60; SER-68 AND SER-103</scope>
    <scope>POLYMORPHISM</scope>
</reference>
<comment type="function">
    <text evidence="12 25">Component of the ankyrin-1 complex, a multiprotein complex involved in the stability and shape of the erythrocyte membrane (PubMed:35835865). Mediates the primary membrane attachment site for ANK1 when associated with RHAG (PubMed:35835865). May participate in the ammonium and carbon dioxide transport through the heterotrimer form (Probable).</text>
</comment>
<comment type="subunit">
    <text evidence="12">Heterotrimer; a RHCE monomer interacts with a RHAG homodimer (PubMed:35835865). Component of the ankyrin-1 complex in the erythrocyte, composed of ANK1, RHCE, RHAG, SLC4A1, EPB42, GYPA, GYPB and AQP1 (PubMed:35835865). Interacts (via the N- and C-terminal) with ANK1 (via ANk 1-5 repeats); mediates the primary membrane attachment site for ANK1 (PubMed:35835865).</text>
</comment>
<comment type="subcellular location">
    <subcellularLocation>
        <location>Membrane</location>
        <topology>Multi-pass membrane protein</topology>
    </subcellularLocation>
</comment>
<comment type="alternative products">
    <event type="alternative splicing"/>
    <isoform>
        <id>P18577-1</id>
        <name>RHI</name>
        <sequence type="displayed"/>
    </isoform>
    <isoform>
        <id>P18577-2</id>
        <name>RHIV</name>
        <name>1e</name>
        <sequence type="described" ref="VSP_005703 VSP_005704"/>
    </isoform>
    <isoform>
        <id>P18577-3</id>
        <name>RHVI</name>
        <name>7c</name>
        <sequence type="described" ref="VSP_005702 VSP_005705"/>
    </isoform>
    <isoform>
        <id>P18577-4</id>
        <name>RHVIII</name>
        <sequence type="described" ref="VSP_005701"/>
    </isoform>
    <isoform>
        <id>P18577-5</id>
        <name>1c</name>
        <sequence type="described" ref="VSP_005705"/>
    </isoform>
    <isoform>
        <id>P18577-6</id>
        <name>1d</name>
        <sequence type="described" ref="VSP_037514"/>
    </isoform>
    <isoform>
        <id>P18577-7</id>
        <name>1h</name>
        <sequence type="described" ref="VSP_037513"/>
    </isoform>
    <isoform>
        <id>P18577-8</id>
        <name>2e</name>
        <sequence type="described" ref="VSP_037510 VSP_037512"/>
    </isoform>
    <isoform>
        <id>P18577-9</id>
        <name>4g</name>
        <name>RhPI-Beta</name>
        <sequence type="described" ref="VSP_037509"/>
    </isoform>
    <isoform>
        <id>P18577-10</id>
        <name>7a</name>
        <sequence type="described" ref="VSP_005702"/>
    </isoform>
    <isoform>
        <id>P18577-11</id>
        <name>8a</name>
        <sequence type="described" ref="VSP_037506 VSP_037511"/>
    </isoform>
    <isoform>
        <id>P18577-12</id>
        <name>8e</name>
        <sequence type="described" ref="VSP_037507 VSP_037508"/>
    </isoform>
    <isoform>
        <id>P18577-13</id>
        <name>8h</name>
        <sequence type="described" ref="VSP_037505"/>
    </isoform>
    <isoform>
        <id>P18577-14</id>
        <name>RhPI-Alpha</name>
        <sequence type="described" ref="VSP_038405 VSP_038406"/>
    </isoform>
</comment>
<comment type="tissue specificity">
    <text evidence="14">Restricted to tissues or cell lines expressing erythroid characters. Isoform 4g and isoform RhPI-Alpha are expressed in immature erythroblasts but not in mature erythroblasts.</text>
</comment>
<comment type="polymorphism">
    <text evidence="2 15">RhCE and RhD are responsible for the RH blood group system. The molecular basis of the E=Rh3/e=Rh5 blood group antigens is a single variation in position 226; Pro-226 corresponds to Rh3 and Ala-226 to Rh5. Variant p.Trp16Cys is associated with altered expression of E antigen. The molecular basis of the C=Rh2/c=Rh4 blood group antigens are variations in position 16, 60, 68 and 103; p.Cys16Trp, p.Ile60Leu, p.Ser68Asn and p.Ser103Pro are found in antigen Rh4.</text>
</comment>
<comment type="disease" evidence="9 16">
    <disease id="DI-05246">
        <name>Rh-null, amorph type</name>
        <acronym>RHNA</acronym>
        <description>An autosomal recessive condition characterized by red blood cells that lack all Rh antigens, have increased osmotic fragility, diminished lifespan, and show changes in morphology resulting in stomatocytosis. Rh-null individuals have mild to moderate hemolytic anemia. They are at risk of having adverse reactions in response to transfusion or pregnancy, because they may produce antibodies against several of the Rh antigens.</description>
        <dbReference type="MIM" id="617970"/>
    </disease>
    <text>The disease is caused by variants affecting the gene represented in this entry.</text>
</comment>
<comment type="similarity">
    <text evidence="25">Belongs to the ammonium transporter (TC 2.A.49) family. Rh subfamily.</text>
</comment>